<gene>
    <name evidence="1" type="primary">hemE</name>
    <name type="ordered locus">BMEI0001</name>
</gene>
<reference key="1">
    <citation type="journal article" date="2002" name="Proc. Natl. Acad. Sci. U.S.A.">
        <title>The genome sequence of the facultative intracellular pathogen Brucella melitensis.</title>
        <authorList>
            <person name="DelVecchio V.G."/>
            <person name="Kapatral V."/>
            <person name="Redkar R.J."/>
            <person name="Patra G."/>
            <person name="Mujer C."/>
            <person name="Los T."/>
            <person name="Ivanova N."/>
            <person name="Anderson I."/>
            <person name="Bhattacharyya A."/>
            <person name="Lykidis A."/>
            <person name="Reznik G."/>
            <person name="Jablonski L."/>
            <person name="Larsen N."/>
            <person name="D'Souza M."/>
            <person name="Bernal A."/>
            <person name="Mazur M."/>
            <person name="Goltsman E."/>
            <person name="Selkov E."/>
            <person name="Elzer P.H."/>
            <person name="Hagius S."/>
            <person name="O'Callaghan D."/>
            <person name="Letesson J.-J."/>
            <person name="Haselkorn R."/>
            <person name="Kyrpides N.C."/>
            <person name="Overbeek R."/>
        </authorList>
    </citation>
    <scope>NUCLEOTIDE SEQUENCE [LARGE SCALE GENOMIC DNA]</scope>
    <source>
        <strain>ATCC 23456 / CCUG 17765 / NCTC 10094 / 16M</strain>
    </source>
</reference>
<dbReference type="EC" id="4.1.1.37" evidence="1"/>
<dbReference type="EMBL" id="AE008917">
    <property type="protein sequence ID" value="AAL51183.1"/>
    <property type="molecule type" value="Genomic_DNA"/>
</dbReference>
<dbReference type="PIR" id="AD3252">
    <property type="entry name" value="AD3252"/>
</dbReference>
<dbReference type="RefSeq" id="WP_004684534.1">
    <property type="nucleotide sequence ID" value="NZ_GG703778.1"/>
</dbReference>
<dbReference type="SMR" id="Q8YJT1"/>
<dbReference type="GeneID" id="29594977"/>
<dbReference type="KEGG" id="bme:BMEI0001"/>
<dbReference type="KEGG" id="bmel:DK63_1433"/>
<dbReference type="PATRIC" id="fig|224914.52.peg.1508"/>
<dbReference type="eggNOG" id="COG0407">
    <property type="taxonomic scope" value="Bacteria"/>
</dbReference>
<dbReference type="PhylomeDB" id="Q8YJT1"/>
<dbReference type="UniPathway" id="UPA00251">
    <property type="reaction ID" value="UER00321"/>
</dbReference>
<dbReference type="Proteomes" id="UP000000419">
    <property type="component" value="Chromosome I"/>
</dbReference>
<dbReference type="GO" id="GO:0005829">
    <property type="term" value="C:cytosol"/>
    <property type="evidence" value="ECO:0007669"/>
    <property type="project" value="TreeGrafter"/>
</dbReference>
<dbReference type="GO" id="GO:0004853">
    <property type="term" value="F:uroporphyrinogen decarboxylase activity"/>
    <property type="evidence" value="ECO:0007669"/>
    <property type="project" value="UniProtKB-UniRule"/>
</dbReference>
<dbReference type="GO" id="GO:0019353">
    <property type="term" value="P:protoporphyrinogen IX biosynthetic process from glutamate"/>
    <property type="evidence" value="ECO:0007669"/>
    <property type="project" value="TreeGrafter"/>
</dbReference>
<dbReference type="CDD" id="cd00717">
    <property type="entry name" value="URO-D"/>
    <property type="match status" value="1"/>
</dbReference>
<dbReference type="FunFam" id="3.20.20.210:FF:000007">
    <property type="entry name" value="Uroporphyrinogen decarboxylase"/>
    <property type="match status" value="1"/>
</dbReference>
<dbReference type="Gene3D" id="3.20.20.210">
    <property type="match status" value="1"/>
</dbReference>
<dbReference type="HAMAP" id="MF_00218">
    <property type="entry name" value="URO_D"/>
    <property type="match status" value="1"/>
</dbReference>
<dbReference type="InterPro" id="IPR038071">
    <property type="entry name" value="UROD/MetE-like_sf"/>
</dbReference>
<dbReference type="InterPro" id="IPR006361">
    <property type="entry name" value="Uroporphyrinogen_deCO2ase_HemE"/>
</dbReference>
<dbReference type="InterPro" id="IPR000257">
    <property type="entry name" value="Uroporphyrinogen_deCOase"/>
</dbReference>
<dbReference type="NCBIfam" id="TIGR01464">
    <property type="entry name" value="hemE"/>
    <property type="match status" value="1"/>
</dbReference>
<dbReference type="PANTHER" id="PTHR21091">
    <property type="entry name" value="METHYLTETRAHYDROFOLATE:HOMOCYSTEINE METHYLTRANSFERASE RELATED"/>
    <property type="match status" value="1"/>
</dbReference>
<dbReference type="PANTHER" id="PTHR21091:SF169">
    <property type="entry name" value="UROPORPHYRINOGEN DECARBOXYLASE"/>
    <property type="match status" value="1"/>
</dbReference>
<dbReference type="Pfam" id="PF01208">
    <property type="entry name" value="URO-D"/>
    <property type="match status" value="1"/>
</dbReference>
<dbReference type="SUPFAM" id="SSF51726">
    <property type="entry name" value="UROD/MetE-like"/>
    <property type="match status" value="1"/>
</dbReference>
<dbReference type="PROSITE" id="PS00906">
    <property type="entry name" value="UROD_1"/>
    <property type="match status" value="1"/>
</dbReference>
<dbReference type="PROSITE" id="PS00907">
    <property type="entry name" value="UROD_2"/>
    <property type="match status" value="1"/>
</dbReference>
<feature type="chain" id="PRO_0000187589" description="Uroporphyrinogen decarboxylase">
    <location>
        <begin position="1"/>
        <end position="341"/>
    </location>
</feature>
<feature type="binding site" evidence="1">
    <location>
        <begin position="23"/>
        <end position="27"/>
    </location>
    <ligand>
        <name>substrate</name>
    </ligand>
</feature>
<feature type="binding site" evidence="1">
    <location>
        <position position="42"/>
    </location>
    <ligand>
        <name>substrate</name>
    </ligand>
</feature>
<feature type="binding site" evidence="1">
    <location>
        <position position="73"/>
    </location>
    <ligand>
        <name>substrate</name>
    </ligand>
</feature>
<feature type="binding site" evidence="1">
    <location>
        <position position="148"/>
    </location>
    <ligand>
        <name>substrate</name>
    </ligand>
</feature>
<feature type="binding site" evidence="1">
    <location>
        <position position="203"/>
    </location>
    <ligand>
        <name>substrate</name>
    </ligand>
</feature>
<feature type="binding site" evidence="1">
    <location>
        <position position="318"/>
    </location>
    <ligand>
        <name>substrate</name>
    </ligand>
</feature>
<feature type="site" description="Transition state stabilizer" evidence="1">
    <location>
        <position position="73"/>
    </location>
</feature>
<name>DCUP_BRUME</name>
<comment type="function">
    <text evidence="1">Catalyzes the decarboxylation of four acetate groups of uroporphyrinogen-III to yield coproporphyrinogen-III.</text>
</comment>
<comment type="catalytic activity">
    <reaction evidence="1">
        <text>uroporphyrinogen III + 4 H(+) = coproporphyrinogen III + 4 CO2</text>
        <dbReference type="Rhea" id="RHEA:19865"/>
        <dbReference type="ChEBI" id="CHEBI:15378"/>
        <dbReference type="ChEBI" id="CHEBI:16526"/>
        <dbReference type="ChEBI" id="CHEBI:57308"/>
        <dbReference type="ChEBI" id="CHEBI:57309"/>
        <dbReference type="EC" id="4.1.1.37"/>
    </reaction>
</comment>
<comment type="pathway">
    <text evidence="1">Porphyrin-containing compound metabolism; protoporphyrin-IX biosynthesis; coproporphyrinogen-III from 5-aminolevulinate: step 4/4.</text>
</comment>
<comment type="subunit">
    <text evidence="1">Homodimer.</text>
</comment>
<comment type="subcellular location">
    <subcellularLocation>
        <location evidence="1">Cytoplasm</location>
    </subcellularLocation>
</comment>
<comment type="similarity">
    <text evidence="1">Belongs to the uroporphyrinogen decarboxylase family.</text>
</comment>
<organism>
    <name type="scientific">Brucella melitensis biotype 1 (strain ATCC 23456 / CCUG 17765 / NCTC 10094 / 16M)</name>
    <dbReference type="NCBI Taxonomy" id="224914"/>
    <lineage>
        <taxon>Bacteria</taxon>
        <taxon>Pseudomonadati</taxon>
        <taxon>Pseudomonadota</taxon>
        <taxon>Alphaproteobacteria</taxon>
        <taxon>Hyphomicrobiales</taxon>
        <taxon>Brucellaceae</taxon>
        <taxon>Brucella/Ochrobactrum group</taxon>
        <taxon>Brucella</taxon>
    </lineage>
</organism>
<protein>
    <recommendedName>
        <fullName evidence="1">Uroporphyrinogen decarboxylase</fullName>
        <shortName evidence="1">UPD</shortName>
        <shortName evidence="1">URO-D</shortName>
        <ecNumber evidence="1">4.1.1.37</ecNumber>
    </recommendedName>
</protein>
<accession>Q8YJT1</accession>
<evidence type="ECO:0000255" key="1">
    <source>
        <dbReference type="HAMAP-Rule" id="MF_00218"/>
    </source>
</evidence>
<keyword id="KW-0963">Cytoplasm</keyword>
<keyword id="KW-0210">Decarboxylase</keyword>
<keyword id="KW-0456">Lyase</keyword>
<keyword id="KW-0627">Porphyrin biosynthesis</keyword>
<proteinExistence type="inferred from homology"/>
<sequence length="341" mass="37788">MNLKVLKVIDGETVFPPPIWMMRQAGRYLPEYRETRKKAGSFLDLCYSPDLAVEVTLQPIRRFGFDAAILFSDILVVPHALGRDLRFEEGKGPLMTPIDADEIFWLETEGVAKRLEPVYETVRLVREQLPDETTLLGFCGAPWTVATYMIAGHGTPDQAPARLFAYRFPEAFEKLLNDLADVSAEYLIEQLGAGADAVQIFDSWSGVLDEDCFERFCIRPVARIVQKVRAVYPQARIIGFPKGAGMLYAGYREKTGVDMLGLDWSVPLSFAALLQEEGAVQGNLDPLRVVAGGNALDEGVDAILERMGQGPLVFNLGHGITPQAPIENVQRMIDRVRGGKS</sequence>